<dbReference type="EC" id="6.5.1.2" evidence="1"/>
<dbReference type="EMBL" id="CP000097">
    <property type="protein sequence ID" value="ABB27163.1"/>
    <property type="molecule type" value="Genomic_DNA"/>
</dbReference>
<dbReference type="RefSeq" id="WP_011360941.1">
    <property type="nucleotide sequence ID" value="NC_007513.1"/>
</dbReference>
<dbReference type="SMR" id="Q3AUH7"/>
<dbReference type="STRING" id="316279.Syncc9902_2205"/>
<dbReference type="KEGG" id="sye:Syncc9902_2205"/>
<dbReference type="eggNOG" id="COG0272">
    <property type="taxonomic scope" value="Bacteria"/>
</dbReference>
<dbReference type="HOGENOM" id="CLU_007764_2_1_3"/>
<dbReference type="OrthoDB" id="9759736at2"/>
<dbReference type="Proteomes" id="UP000002712">
    <property type="component" value="Chromosome"/>
</dbReference>
<dbReference type="GO" id="GO:0005829">
    <property type="term" value="C:cytosol"/>
    <property type="evidence" value="ECO:0007669"/>
    <property type="project" value="TreeGrafter"/>
</dbReference>
<dbReference type="GO" id="GO:0003911">
    <property type="term" value="F:DNA ligase (NAD+) activity"/>
    <property type="evidence" value="ECO:0007669"/>
    <property type="project" value="UniProtKB-UniRule"/>
</dbReference>
<dbReference type="GO" id="GO:0046872">
    <property type="term" value="F:metal ion binding"/>
    <property type="evidence" value="ECO:0007669"/>
    <property type="project" value="UniProtKB-KW"/>
</dbReference>
<dbReference type="GO" id="GO:0006281">
    <property type="term" value="P:DNA repair"/>
    <property type="evidence" value="ECO:0007669"/>
    <property type="project" value="UniProtKB-KW"/>
</dbReference>
<dbReference type="GO" id="GO:0006260">
    <property type="term" value="P:DNA replication"/>
    <property type="evidence" value="ECO:0007669"/>
    <property type="project" value="UniProtKB-KW"/>
</dbReference>
<dbReference type="CDD" id="cd17748">
    <property type="entry name" value="BRCT_DNA_ligase_like"/>
    <property type="match status" value="1"/>
</dbReference>
<dbReference type="CDD" id="cd00114">
    <property type="entry name" value="LIGANc"/>
    <property type="match status" value="1"/>
</dbReference>
<dbReference type="FunFam" id="1.10.150.20:FF:000007">
    <property type="entry name" value="DNA ligase"/>
    <property type="match status" value="1"/>
</dbReference>
<dbReference type="FunFam" id="2.40.50.140:FF:000012">
    <property type="entry name" value="DNA ligase"/>
    <property type="match status" value="1"/>
</dbReference>
<dbReference type="FunFam" id="3.30.470.30:FF:000001">
    <property type="entry name" value="DNA ligase"/>
    <property type="match status" value="1"/>
</dbReference>
<dbReference type="FunFam" id="3.40.50.10190:FF:000054">
    <property type="entry name" value="DNA ligase"/>
    <property type="match status" value="1"/>
</dbReference>
<dbReference type="Gene3D" id="6.20.10.30">
    <property type="match status" value="1"/>
</dbReference>
<dbReference type="Gene3D" id="1.10.150.20">
    <property type="entry name" value="5' to 3' exonuclease, C-terminal subdomain"/>
    <property type="match status" value="2"/>
</dbReference>
<dbReference type="Gene3D" id="3.40.50.10190">
    <property type="entry name" value="BRCT domain"/>
    <property type="match status" value="1"/>
</dbReference>
<dbReference type="Gene3D" id="3.30.470.30">
    <property type="entry name" value="DNA ligase/mRNA capping enzyme"/>
    <property type="match status" value="1"/>
</dbReference>
<dbReference type="Gene3D" id="1.10.287.610">
    <property type="entry name" value="Helix hairpin bin"/>
    <property type="match status" value="1"/>
</dbReference>
<dbReference type="Gene3D" id="2.40.50.140">
    <property type="entry name" value="Nucleic acid-binding proteins"/>
    <property type="match status" value="1"/>
</dbReference>
<dbReference type="HAMAP" id="MF_01588">
    <property type="entry name" value="DNA_ligase_A"/>
    <property type="match status" value="1"/>
</dbReference>
<dbReference type="InterPro" id="IPR001357">
    <property type="entry name" value="BRCT_dom"/>
</dbReference>
<dbReference type="InterPro" id="IPR036420">
    <property type="entry name" value="BRCT_dom_sf"/>
</dbReference>
<dbReference type="InterPro" id="IPR041663">
    <property type="entry name" value="DisA/LigA_HHH"/>
</dbReference>
<dbReference type="InterPro" id="IPR001679">
    <property type="entry name" value="DNA_ligase"/>
</dbReference>
<dbReference type="InterPro" id="IPR033136">
    <property type="entry name" value="DNA_ligase_CS"/>
</dbReference>
<dbReference type="InterPro" id="IPR013839">
    <property type="entry name" value="DNAligase_adenylation"/>
</dbReference>
<dbReference type="InterPro" id="IPR013840">
    <property type="entry name" value="DNAligase_N"/>
</dbReference>
<dbReference type="InterPro" id="IPR012340">
    <property type="entry name" value="NA-bd_OB-fold"/>
</dbReference>
<dbReference type="InterPro" id="IPR004150">
    <property type="entry name" value="NAD_DNA_ligase_OB"/>
</dbReference>
<dbReference type="InterPro" id="IPR010994">
    <property type="entry name" value="RuvA_2-like"/>
</dbReference>
<dbReference type="InterPro" id="IPR004149">
    <property type="entry name" value="Znf_DNAligase_C4"/>
</dbReference>
<dbReference type="NCBIfam" id="TIGR00575">
    <property type="entry name" value="dnlj"/>
    <property type="match status" value="1"/>
</dbReference>
<dbReference type="NCBIfam" id="NF005932">
    <property type="entry name" value="PRK07956.1"/>
    <property type="match status" value="1"/>
</dbReference>
<dbReference type="PANTHER" id="PTHR23389">
    <property type="entry name" value="CHROMOSOME TRANSMISSION FIDELITY FACTOR 18"/>
    <property type="match status" value="1"/>
</dbReference>
<dbReference type="PANTHER" id="PTHR23389:SF9">
    <property type="entry name" value="DNA LIGASE"/>
    <property type="match status" value="1"/>
</dbReference>
<dbReference type="Pfam" id="PF00533">
    <property type="entry name" value="BRCT"/>
    <property type="match status" value="1"/>
</dbReference>
<dbReference type="Pfam" id="PF01653">
    <property type="entry name" value="DNA_ligase_aden"/>
    <property type="match status" value="1"/>
</dbReference>
<dbReference type="Pfam" id="PF03120">
    <property type="entry name" value="DNA_ligase_OB"/>
    <property type="match status" value="1"/>
</dbReference>
<dbReference type="Pfam" id="PF03119">
    <property type="entry name" value="DNA_ligase_ZBD"/>
    <property type="match status" value="1"/>
</dbReference>
<dbReference type="Pfam" id="PF12826">
    <property type="entry name" value="HHH_2"/>
    <property type="match status" value="1"/>
</dbReference>
<dbReference type="Pfam" id="PF14520">
    <property type="entry name" value="HHH_5"/>
    <property type="match status" value="1"/>
</dbReference>
<dbReference type="Pfam" id="PF22745">
    <property type="entry name" value="Nlig-Ia"/>
    <property type="match status" value="1"/>
</dbReference>
<dbReference type="PIRSF" id="PIRSF001604">
    <property type="entry name" value="LigA"/>
    <property type="match status" value="1"/>
</dbReference>
<dbReference type="SMART" id="SM00292">
    <property type="entry name" value="BRCT"/>
    <property type="match status" value="1"/>
</dbReference>
<dbReference type="SMART" id="SM00532">
    <property type="entry name" value="LIGANc"/>
    <property type="match status" value="1"/>
</dbReference>
<dbReference type="SUPFAM" id="SSF52113">
    <property type="entry name" value="BRCT domain"/>
    <property type="match status" value="1"/>
</dbReference>
<dbReference type="SUPFAM" id="SSF56091">
    <property type="entry name" value="DNA ligase/mRNA capping enzyme, catalytic domain"/>
    <property type="match status" value="1"/>
</dbReference>
<dbReference type="SUPFAM" id="SSF50249">
    <property type="entry name" value="Nucleic acid-binding proteins"/>
    <property type="match status" value="1"/>
</dbReference>
<dbReference type="SUPFAM" id="SSF47781">
    <property type="entry name" value="RuvA domain 2-like"/>
    <property type="match status" value="1"/>
</dbReference>
<dbReference type="PROSITE" id="PS50172">
    <property type="entry name" value="BRCT"/>
    <property type="match status" value="1"/>
</dbReference>
<dbReference type="PROSITE" id="PS01056">
    <property type="entry name" value="DNA_LIGASE_N2"/>
    <property type="match status" value="1"/>
</dbReference>
<reference key="1">
    <citation type="submission" date="2005-08" db="EMBL/GenBank/DDBJ databases">
        <title>Complete sequence of Synechococcus sp. CC9902.</title>
        <authorList>
            <person name="Copeland A."/>
            <person name="Lucas S."/>
            <person name="Lapidus A."/>
            <person name="Barry K."/>
            <person name="Detter J.C."/>
            <person name="Glavina T."/>
            <person name="Hammon N."/>
            <person name="Israni S."/>
            <person name="Pitluck S."/>
            <person name="Martinez M."/>
            <person name="Schmutz J."/>
            <person name="Larimer F."/>
            <person name="Land M."/>
            <person name="Kyrpides N."/>
            <person name="Ivanova N."/>
            <person name="Richardson P."/>
        </authorList>
    </citation>
    <scope>NUCLEOTIDE SEQUENCE [LARGE SCALE GENOMIC DNA]</scope>
    <source>
        <strain>CC9902</strain>
    </source>
</reference>
<protein>
    <recommendedName>
        <fullName evidence="1">DNA ligase</fullName>
        <ecNumber evidence="1">6.5.1.2</ecNumber>
    </recommendedName>
    <alternativeName>
        <fullName evidence="1">Polydeoxyribonucleotide synthase [NAD(+)]</fullName>
    </alternativeName>
</protein>
<evidence type="ECO:0000255" key="1">
    <source>
        <dbReference type="HAMAP-Rule" id="MF_01588"/>
    </source>
</evidence>
<gene>
    <name evidence="1" type="primary">ligA</name>
    <name type="ordered locus">Syncc9902_2205</name>
</gene>
<comment type="function">
    <text evidence="1">DNA ligase that catalyzes the formation of phosphodiester linkages between 5'-phosphoryl and 3'-hydroxyl groups in double-stranded DNA using NAD as a coenzyme and as the energy source for the reaction. It is essential for DNA replication and repair of damaged DNA.</text>
</comment>
<comment type="catalytic activity">
    <reaction evidence="1">
        <text>NAD(+) + (deoxyribonucleotide)n-3'-hydroxyl + 5'-phospho-(deoxyribonucleotide)m = (deoxyribonucleotide)n+m + AMP + beta-nicotinamide D-nucleotide.</text>
        <dbReference type="EC" id="6.5.1.2"/>
    </reaction>
</comment>
<comment type="cofactor">
    <cofactor evidence="1">
        <name>Mg(2+)</name>
        <dbReference type="ChEBI" id="CHEBI:18420"/>
    </cofactor>
    <cofactor evidence="1">
        <name>Mn(2+)</name>
        <dbReference type="ChEBI" id="CHEBI:29035"/>
    </cofactor>
</comment>
<comment type="similarity">
    <text evidence="1">Belongs to the NAD-dependent DNA ligase family. LigA subfamily.</text>
</comment>
<organism>
    <name type="scientific">Synechococcus sp. (strain CC9902)</name>
    <dbReference type="NCBI Taxonomy" id="316279"/>
    <lineage>
        <taxon>Bacteria</taxon>
        <taxon>Bacillati</taxon>
        <taxon>Cyanobacteriota</taxon>
        <taxon>Cyanophyceae</taxon>
        <taxon>Synechococcales</taxon>
        <taxon>Synechococcaceae</taxon>
        <taxon>Synechococcus</taxon>
    </lineage>
</organism>
<proteinExistence type="inferred from homology"/>
<keyword id="KW-0227">DNA damage</keyword>
<keyword id="KW-0234">DNA repair</keyword>
<keyword id="KW-0235">DNA replication</keyword>
<keyword id="KW-0436">Ligase</keyword>
<keyword id="KW-0460">Magnesium</keyword>
<keyword id="KW-0464">Manganese</keyword>
<keyword id="KW-0479">Metal-binding</keyword>
<keyword id="KW-0520">NAD</keyword>
<keyword id="KW-1185">Reference proteome</keyword>
<keyword id="KW-0862">Zinc</keyword>
<accession>Q3AUH7</accession>
<feature type="chain" id="PRO_0000313481" description="DNA ligase">
    <location>
        <begin position="1"/>
        <end position="680"/>
    </location>
</feature>
<feature type="domain" description="BRCT" evidence="1">
    <location>
        <begin position="600"/>
        <end position="680"/>
    </location>
</feature>
<feature type="active site" description="N6-AMP-lysine intermediate" evidence="1">
    <location>
        <position position="117"/>
    </location>
</feature>
<feature type="binding site" evidence="1">
    <location>
        <begin position="32"/>
        <end position="36"/>
    </location>
    <ligand>
        <name>NAD(+)</name>
        <dbReference type="ChEBI" id="CHEBI:57540"/>
    </ligand>
</feature>
<feature type="binding site" evidence="1">
    <location>
        <begin position="81"/>
        <end position="82"/>
    </location>
    <ligand>
        <name>NAD(+)</name>
        <dbReference type="ChEBI" id="CHEBI:57540"/>
    </ligand>
</feature>
<feature type="binding site" evidence="1">
    <location>
        <position position="115"/>
    </location>
    <ligand>
        <name>NAD(+)</name>
        <dbReference type="ChEBI" id="CHEBI:57540"/>
    </ligand>
</feature>
<feature type="binding site" evidence="1">
    <location>
        <position position="138"/>
    </location>
    <ligand>
        <name>NAD(+)</name>
        <dbReference type="ChEBI" id="CHEBI:57540"/>
    </ligand>
</feature>
<feature type="binding site" evidence="1">
    <location>
        <position position="175"/>
    </location>
    <ligand>
        <name>NAD(+)</name>
        <dbReference type="ChEBI" id="CHEBI:57540"/>
    </ligand>
</feature>
<feature type="binding site" evidence="1">
    <location>
        <position position="291"/>
    </location>
    <ligand>
        <name>NAD(+)</name>
        <dbReference type="ChEBI" id="CHEBI:57540"/>
    </ligand>
</feature>
<feature type="binding site" evidence="1">
    <location>
        <position position="315"/>
    </location>
    <ligand>
        <name>NAD(+)</name>
        <dbReference type="ChEBI" id="CHEBI:57540"/>
    </ligand>
</feature>
<feature type="binding site" evidence="1">
    <location>
        <position position="409"/>
    </location>
    <ligand>
        <name>Zn(2+)</name>
        <dbReference type="ChEBI" id="CHEBI:29105"/>
    </ligand>
</feature>
<feature type="binding site" evidence="1">
    <location>
        <position position="412"/>
    </location>
    <ligand>
        <name>Zn(2+)</name>
        <dbReference type="ChEBI" id="CHEBI:29105"/>
    </ligand>
</feature>
<feature type="binding site" evidence="1">
    <location>
        <position position="427"/>
    </location>
    <ligand>
        <name>Zn(2+)</name>
        <dbReference type="ChEBI" id="CHEBI:29105"/>
    </ligand>
</feature>
<feature type="binding site" evidence="1">
    <location>
        <position position="432"/>
    </location>
    <ligand>
        <name>Zn(2+)</name>
        <dbReference type="ChEBI" id="CHEBI:29105"/>
    </ligand>
</feature>
<sequence>MPDQSERATELRNLLNTAAHAYYVLDTPTMEDAVYDRLYQELLELEQNTPSLKTADSPTQRVGGAPAEGFTSVEHRIGLLSLDNAFNRDDLSAWNERLLRAIDRPLGSPLDLVSELKIDGNALALSYRNGVLERAATRGDGQRGEEITANVRTISAIPLRLRLDNPPEWVEIRGEAFIPDNTFAEINAERESRGEALFANPRNACAGTLRQLDPKVVAARRLDFFAYTLHLPTQEQPASQWDALTWLENAGFRVNPNRALCADLADINRFSDHWEQARHDLPYATDGVVVKLNNLVLQDEAGFTQKSPRWAIALKFPAEEAPSRLLRVVVQIGRTGVITPVAEFEPVALAGTSVSRATLHNADRIAELDLHLGDTIVVRKAGEIIPEVVRVLPELRPSSATPVQLPEHCPECGSNLVREGDEVATRCVNSSCPAILRGGLRHWVSKGALDVDGLGSKLIEQLVDQGLVRSIADLYRLDAALLGSLDRMGERSANNLIEALKLSRQRSWARQLYGLGIHHIGEVSAKAITAEFSDSNSLMEAACTAPERITAIYGIGTELAQSLQQWFSNPANQHLLDDLRSQGFRFALDDNDPGRLGAAASEQHLKGLTFVLTGTLPTLSRSEAKERIETCGGKVSGSVSKKTDYLVAGEEAGSKLTKATTLGIKILDEDRLQAMLKDSP</sequence>
<name>DNLJ_SYNS9</name>